<feature type="chain" id="PRO_0000121879" description="tRNA pseudouridine synthase B">
    <location>
        <begin position="1"/>
        <end position="283"/>
    </location>
</feature>
<feature type="active site" description="Nucleophile" evidence="1">
    <location>
        <position position="38"/>
    </location>
</feature>
<name>TRUB_ONYPE</name>
<sequence length="283" mass="32761">MNGFFLVNKPEKMTSHDVVFQIKKKFHFDKVGHTGTLDPLASGLLIICVGKATKLAFLFDKLPKTYQGTFLFNKHYDTLDVTGKLLDTKNTPLTDCNIQKSFASFHQKKYLQIPPMFSAVKIKGKKMYRLARKNQVVDIPPREVFIHHFEKTSLFCRDQVDFLAHVSKGTYIRSLARDLALQLNTYGALLRLQRTAIGTHLLQNAKTIENLELNDLILDSTFFAAYDELILNDYLIKLVKNGTHLDQRQITTKKPFIVKDSNKNFVAYYDTLDENKYYPRYFF</sequence>
<keyword id="KW-0413">Isomerase</keyword>
<keyword id="KW-0819">tRNA processing</keyword>
<evidence type="ECO:0000255" key="1">
    <source>
        <dbReference type="HAMAP-Rule" id="MF_01080"/>
    </source>
</evidence>
<organism>
    <name type="scientific">Onion yellows phytoplasma (strain OY-M)</name>
    <dbReference type="NCBI Taxonomy" id="262768"/>
    <lineage>
        <taxon>Bacteria</taxon>
        <taxon>Bacillati</taxon>
        <taxon>Mycoplasmatota</taxon>
        <taxon>Mollicutes</taxon>
        <taxon>Acholeplasmatales</taxon>
        <taxon>Acholeplasmataceae</taxon>
        <taxon>Candidatus Phytoplasma</taxon>
        <taxon>16SrI (Aster yellows group)</taxon>
    </lineage>
</organism>
<dbReference type="EC" id="5.4.99.25" evidence="1"/>
<dbReference type="EMBL" id="AP006628">
    <property type="protein sequence ID" value="BAD04322.1"/>
    <property type="molecule type" value="Genomic_DNA"/>
</dbReference>
<dbReference type="SMR" id="Q6YQY6"/>
<dbReference type="STRING" id="262768.PAM_237"/>
<dbReference type="KEGG" id="poy:PAM_237"/>
<dbReference type="eggNOG" id="COG0130">
    <property type="taxonomic scope" value="Bacteria"/>
</dbReference>
<dbReference type="HOGENOM" id="CLU_032087_0_1_14"/>
<dbReference type="BioCyc" id="OYEL262768:G1G26-285-MONOMER"/>
<dbReference type="Proteomes" id="UP000002523">
    <property type="component" value="Chromosome"/>
</dbReference>
<dbReference type="GO" id="GO:0003723">
    <property type="term" value="F:RNA binding"/>
    <property type="evidence" value="ECO:0007669"/>
    <property type="project" value="InterPro"/>
</dbReference>
<dbReference type="GO" id="GO:0160148">
    <property type="term" value="F:tRNA pseudouridine(55) synthase activity"/>
    <property type="evidence" value="ECO:0007669"/>
    <property type="project" value="UniProtKB-EC"/>
</dbReference>
<dbReference type="GO" id="GO:1990481">
    <property type="term" value="P:mRNA pseudouridine synthesis"/>
    <property type="evidence" value="ECO:0007669"/>
    <property type="project" value="TreeGrafter"/>
</dbReference>
<dbReference type="GO" id="GO:0031119">
    <property type="term" value="P:tRNA pseudouridine synthesis"/>
    <property type="evidence" value="ECO:0007669"/>
    <property type="project" value="UniProtKB-UniRule"/>
</dbReference>
<dbReference type="CDD" id="cd02573">
    <property type="entry name" value="PseudoU_synth_EcTruB"/>
    <property type="match status" value="1"/>
</dbReference>
<dbReference type="Gene3D" id="3.30.2350.10">
    <property type="entry name" value="Pseudouridine synthase"/>
    <property type="match status" value="1"/>
</dbReference>
<dbReference type="HAMAP" id="MF_01080">
    <property type="entry name" value="TruB_bact"/>
    <property type="match status" value="1"/>
</dbReference>
<dbReference type="InterPro" id="IPR020103">
    <property type="entry name" value="PsdUridine_synth_cat_dom_sf"/>
</dbReference>
<dbReference type="InterPro" id="IPR002501">
    <property type="entry name" value="PsdUridine_synth_N"/>
</dbReference>
<dbReference type="InterPro" id="IPR014780">
    <property type="entry name" value="tRNA_psdUridine_synth_TruB"/>
</dbReference>
<dbReference type="NCBIfam" id="TIGR00431">
    <property type="entry name" value="TruB"/>
    <property type="match status" value="1"/>
</dbReference>
<dbReference type="PANTHER" id="PTHR13767:SF2">
    <property type="entry name" value="PSEUDOURIDYLATE SYNTHASE TRUB1"/>
    <property type="match status" value="1"/>
</dbReference>
<dbReference type="PANTHER" id="PTHR13767">
    <property type="entry name" value="TRNA-PSEUDOURIDINE SYNTHASE"/>
    <property type="match status" value="1"/>
</dbReference>
<dbReference type="Pfam" id="PF01509">
    <property type="entry name" value="TruB_N"/>
    <property type="match status" value="1"/>
</dbReference>
<dbReference type="SUPFAM" id="SSF55120">
    <property type="entry name" value="Pseudouridine synthase"/>
    <property type="match status" value="1"/>
</dbReference>
<comment type="function">
    <text evidence="1">Responsible for synthesis of pseudouridine from uracil-55 in the psi GC loop of transfer RNAs.</text>
</comment>
<comment type="catalytic activity">
    <reaction evidence="1">
        <text>uridine(55) in tRNA = pseudouridine(55) in tRNA</text>
        <dbReference type="Rhea" id="RHEA:42532"/>
        <dbReference type="Rhea" id="RHEA-COMP:10101"/>
        <dbReference type="Rhea" id="RHEA-COMP:10102"/>
        <dbReference type="ChEBI" id="CHEBI:65314"/>
        <dbReference type="ChEBI" id="CHEBI:65315"/>
        <dbReference type="EC" id="5.4.99.25"/>
    </reaction>
</comment>
<comment type="similarity">
    <text evidence="1">Belongs to the pseudouridine synthase TruB family. Type 1 subfamily.</text>
</comment>
<protein>
    <recommendedName>
        <fullName evidence="1">tRNA pseudouridine synthase B</fullName>
        <ecNumber evidence="1">5.4.99.25</ecNumber>
    </recommendedName>
    <alternativeName>
        <fullName evidence="1">tRNA pseudouridine(55) synthase</fullName>
        <shortName evidence="1">Psi55 synthase</shortName>
    </alternativeName>
    <alternativeName>
        <fullName evidence="1">tRNA pseudouridylate synthase</fullName>
    </alternativeName>
    <alternativeName>
        <fullName evidence="1">tRNA-uridine isomerase</fullName>
    </alternativeName>
</protein>
<reference key="1">
    <citation type="journal article" date="2004" name="Nat. Genet.">
        <title>Reductive evolution suggested from the complete genome sequence of a plant-pathogenic phytoplasma.</title>
        <authorList>
            <person name="Oshima K."/>
            <person name="Kakizawa S."/>
            <person name="Nishigawa H."/>
            <person name="Jung H.-Y."/>
            <person name="Wei W."/>
            <person name="Suzuki S."/>
            <person name="Arashida R."/>
            <person name="Nakata D."/>
            <person name="Miyata S."/>
            <person name="Ugaki M."/>
            <person name="Namba S."/>
        </authorList>
    </citation>
    <scope>NUCLEOTIDE SEQUENCE [LARGE SCALE GENOMIC DNA]</scope>
    <source>
        <strain>OY-M</strain>
    </source>
</reference>
<gene>
    <name evidence="1" type="primary">truB</name>
    <name type="ordered locus">PAM_237</name>
</gene>
<accession>Q6YQY6</accession>
<proteinExistence type="inferred from homology"/>